<proteinExistence type="inferred from homology"/>
<evidence type="ECO:0000255" key="1">
    <source>
        <dbReference type="HAMAP-Rule" id="MF_00456"/>
    </source>
</evidence>
<name>PROB_SHIB3</name>
<comment type="function">
    <text evidence="1">Catalyzes the transfer of a phosphate group to glutamate to form L-glutamate 5-phosphate.</text>
</comment>
<comment type="catalytic activity">
    <reaction evidence="1">
        <text>L-glutamate + ATP = L-glutamyl 5-phosphate + ADP</text>
        <dbReference type="Rhea" id="RHEA:14877"/>
        <dbReference type="ChEBI" id="CHEBI:29985"/>
        <dbReference type="ChEBI" id="CHEBI:30616"/>
        <dbReference type="ChEBI" id="CHEBI:58274"/>
        <dbReference type="ChEBI" id="CHEBI:456216"/>
        <dbReference type="EC" id="2.7.2.11"/>
    </reaction>
</comment>
<comment type="pathway">
    <text evidence="1">Amino-acid biosynthesis; L-proline biosynthesis; L-glutamate 5-semialdehyde from L-glutamate: step 1/2.</text>
</comment>
<comment type="subcellular location">
    <subcellularLocation>
        <location evidence="1">Cytoplasm</location>
    </subcellularLocation>
</comment>
<comment type="similarity">
    <text evidence="1">Belongs to the glutamate 5-kinase family.</text>
</comment>
<protein>
    <recommendedName>
        <fullName evidence="1">Glutamate 5-kinase</fullName>
        <ecNumber evidence="1">2.7.2.11</ecNumber>
    </recommendedName>
    <alternativeName>
        <fullName evidence="1">Gamma-glutamyl kinase</fullName>
        <shortName evidence="1">GK</shortName>
    </alternativeName>
</protein>
<keyword id="KW-0028">Amino-acid biosynthesis</keyword>
<keyword id="KW-0067">ATP-binding</keyword>
<keyword id="KW-0963">Cytoplasm</keyword>
<keyword id="KW-0418">Kinase</keyword>
<keyword id="KW-0547">Nucleotide-binding</keyword>
<keyword id="KW-0641">Proline biosynthesis</keyword>
<keyword id="KW-1185">Reference proteome</keyword>
<keyword id="KW-0808">Transferase</keyword>
<sequence>MSDSQTLVVKLGTSVLTGGSRRLNRAHIVELVRQCAQLHAAGHRIVIVTSGAIAAGREHLGYPELPATIASKQLLAAVGQSRLIQLWEQLFSIYGIHVGQMLLTRADMEDRERFLNARDTLRALLDNNIVPVINENDAVATAEIKVGDNDNLSALAAILAGADKLLLLTDQKGLYTADPRSNPQAELIKDVYGIDDALRAIAGDSVSGLGTGGMSTKLQAADVACRAGIDTIIAAGSKPGVIGDVMEGISVGTLFHAQATPLENRKRWIFGAPPAGEITVDEGATAAILERGSSLLPKGIKSVTGNFSRGEVIRICNLEGRDIAHGVSRYNSDALRRIAGHHSQEIDAILGYEYGPVAVHRDDMITR</sequence>
<accession>B2U3T3</accession>
<dbReference type="EC" id="2.7.2.11" evidence="1"/>
<dbReference type="EMBL" id="CP001063">
    <property type="protein sequence ID" value="ACD09613.1"/>
    <property type="molecule type" value="Genomic_DNA"/>
</dbReference>
<dbReference type="RefSeq" id="WP_001285288.1">
    <property type="nucleotide sequence ID" value="NC_010658.1"/>
</dbReference>
<dbReference type="SMR" id="B2U3T3"/>
<dbReference type="STRING" id="344609.SbBS512_E0239"/>
<dbReference type="GeneID" id="93777151"/>
<dbReference type="KEGG" id="sbc:SbBS512_E0239"/>
<dbReference type="HOGENOM" id="CLU_025400_2_0_6"/>
<dbReference type="UniPathway" id="UPA00098">
    <property type="reaction ID" value="UER00359"/>
</dbReference>
<dbReference type="Proteomes" id="UP000001030">
    <property type="component" value="Chromosome"/>
</dbReference>
<dbReference type="GO" id="GO:0005829">
    <property type="term" value="C:cytosol"/>
    <property type="evidence" value="ECO:0007669"/>
    <property type="project" value="TreeGrafter"/>
</dbReference>
<dbReference type="GO" id="GO:0005524">
    <property type="term" value="F:ATP binding"/>
    <property type="evidence" value="ECO:0007669"/>
    <property type="project" value="UniProtKB-KW"/>
</dbReference>
<dbReference type="GO" id="GO:0004349">
    <property type="term" value="F:glutamate 5-kinase activity"/>
    <property type="evidence" value="ECO:0007669"/>
    <property type="project" value="UniProtKB-UniRule"/>
</dbReference>
<dbReference type="GO" id="GO:0003723">
    <property type="term" value="F:RNA binding"/>
    <property type="evidence" value="ECO:0007669"/>
    <property type="project" value="InterPro"/>
</dbReference>
<dbReference type="GO" id="GO:0055129">
    <property type="term" value="P:L-proline biosynthetic process"/>
    <property type="evidence" value="ECO:0007669"/>
    <property type="project" value="UniProtKB-UniRule"/>
</dbReference>
<dbReference type="CDD" id="cd04242">
    <property type="entry name" value="AAK_G5K_ProB"/>
    <property type="match status" value="1"/>
</dbReference>
<dbReference type="CDD" id="cd21157">
    <property type="entry name" value="PUA_G5K"/>
    <property type="match status" value="1"/>
</dbReference>
<dbReference type="FunFam" id="2.30.130.10:FF:000003">
    <property type="entry name" value="Glutamate 5-kinase"/>
    <property type="match status" value="1"/>
</dbReference>
<dbReference type="FunFam" id="3.40.1160.10:FF:000006">
    <property type="entry name" value="Glutamate 5-kinase"/>
    <property type="match status" value="1"/>
</dbReference>
<dbReference type="Gene3D" id="3.40.1160.10">
    <property type="entry name" value="Acetylglutamate kinase-like"/>
    <property type="match status" value="2"/>
</dbReference>
<dbReference type="Gene3D" id="2.30.130.10">
    <property type="entry name" value="PUA domain"/>
    <property type="match status" value="1"/>
</dbReference>
<dbReference type="HAMAP" id="MF_00456">
    <property type="entry name" value="ProB"/>
    <property type="match status" value="1"/>
</dbReference>
<dbReference type="InterPro" id="IPR036393">
    <property type="entry name" value="AceGlu_kinase-like_sf"/>
</dbReference>
<dbReference type="InterPro" id="IPR001048">
    <property type="entry name" value="Asp/Glu/Uridylate_kinase"/>
</dbReference>
<dbReference type="InterPro" id="IPR041739">
    <property type="entry name" value="G5K_ProB"/>
</dbReference>
<dbReference type="InterPro" id="IPR001057">
    <property type="entry name" value="Glu/AcGlu_kinase"/>
</dbReference>
<dbReference type="InterPro" id="IPR011529">
    <property type="entry name" value="Glu_5kinase"/>
</dbReference>
<dbReference type="InterPro" id="IPR005715">
    <property type="entry name" value="Glu_5kinase/COase_Synthase"/>
</dbReference>
<dbReference type="InterPro" id="IPR019797">
    <property type="entry name" value="Glutamate_5-kinase_CS"/>
</dbReference>
<dbReference type="InterPro" id="IPR002478">
    <property type="entry name" value="PUA"/>
</dbReference>
<dbReference type="InterPro" id="IPR015947">
    <property type="entry name" value="PUA-like_sf"/>
</dbReference>
<dbReference type="InterPro" id="IPR036974">
    <property type="entry name" value="PUA_sf"/>
</dbReference>
<dbReference type="NCBIfam" id="TIGR01027">
    <property type="entry name" value="proB"/>
    <property type="match status" value="1"/>
</dbReference>
<dbReference type="PANTHER" id="PTHR43654">
    <property type="entry name" value="GLUTAMATE 5-KINASE"/>
    <property type="match status" value="1"/>
</dbReference>
<dbReference type="PANTHER" id="PTHR43654:SF1">
    <property type="entry name" value="ISOPENTENYL PHOSPHATE KINASE"/>
    <property type="match status" value="1"/>
</dbReference>
<dbReference type="Pfam" id="PF00696">
    <property type="entry name" value="AA_kinase"/>
    <property type="match status" value="1"/>
</dbReference>
<dbReference type="Pfam" id="PF01472">
    <property type="entry name" value="PUA"/>
    <property type="match status" value="1"/>
</dbReference>
<dbReference type="PIRSF" id="PIRSF000729">
    <property type="entry name" value="GK"/>
    <property type="match status" value="1"/>
</dbReference>
<dbReference type="PRINTS" id="PR00474">
    <property type="entry name" value="GLU5KINASE"/>
</dbReference>
<dbReference type="SMART" id="SM00359">
    <property type="entry name" value="PUA"/>
    <property type="match status" value="1"/>
</dbReference>
<dbReference type="SUPFAM" id="SSF53633">
    <property type="entry name" value="Carbamate kinase-like"/>
    <property type="match status" value="1"/>
</dbReference>
<dbReference type="SUPFAM" id="SSF88697">
    <property type="entry name" value="PUA domain-like"/>
    <property type="match status" value="1"/>
</dbReference>
<dbReference type="PROSITE" id="PS00902">
    <property type="entry name" value="GLUTAMATE_5_KINASE"/>
    <property type="match status" value="1"/>
</dbReference>
<dbReference type="PROSITE" id="PS50890">
    <property type="entry name" value="PUA"/>
    <property type="match status" value="1"/>
</dbReference>
<reference key="1">
    <citation type="submission" date="2008-05" db="EMBL/GenBank/DDBJ databases">
        <title>Complete sequence of Shigella boydii serotype 18 strain BS512.</title>
        <authorList>
            <person name="Rasko D.A."/>
            <person name="Rosovitz M."/>
            <person name="Maurelli A.T."/>
            <person name="Myers G."/>
            <person name="Seshadri R."/>
            <person name="Cer R."/>
            <person name="Jiang L."/>
            <person name="Ravel J."/>
            <person name="Sebastian Y."/>
        </authorList>
    </citation>
    <scope>NUCLEOTIDE SEQUENCE [LARGE SCALE GENOMIC DNA]</scope>
    <source>
        <strain>CDC 3083-94 / BS512</strain>
    </source>
</reference>
<gene>
    <name evidence="1" type="primary">proB</name>
    <name type="ordered locus">SbBS512_E0239</name>
</gene>
<organism>
    <name type="scientific">Shigella boydii serotype 18 (strain CDC 3083-94 / BS512)</name>
    <dbReference type="NCBI Taxonomy" id="344609"/>
    <lineage>
        <taxon>Bacteria</taxon>
        <taxon>Pseudomonadati</taxon>
        <taxon>Pseudomonadota</taxon>
        <taxon>Gammaproteobacteria</taxon>
        <taxon>Enterobacterales</taxon>
        <taxon>Enterobacteriaceae</taxon>
        <taxon>Shigella</taxon>
    </lineage>
</organism>
<feature type="chain" id="PRO_1000125264" description="Glutamate 5-kinase">
    <location>
        <begin position="1"/>
        <end position="367"/>
    </location>
</feature>
<feature type="domain" description="PUA" evidence="1">
    <location>
        <begin position="275"/>
        <end position="353"/>
    </location>
</feature>
<feature type="binding site" evidence="1">
    <location>
        <position position="10"/>
    </location>
    <ligand>
        <name>ATP</name>
        <dbReference type="ChEBI" id="CHEBI:30616"/>
    </ligand>
</feature>
<feature type="binding site" evidence="1">
    <location>
        <position position="50"/>
    </location>
    <ligand>
        <name>substrate</name>
    </ligand>
</feature>
<feature type="binding site" evidence="1">
    <location>
        <position position="137"/>
    </location>
    <ligand>
        <name>substrate</name>
    </ligand>
</feature>
<feature type="binding site" evidence="1">
    <location>
        <position position="149"/>
    </location>
    <ligand>
        <name>substrate</name>
    </ligand>
</feature>
<feature type="binding site" evidence="1">
    <location>
        <begin position="169"/>
        <end position="170"/>
    </location>
    <ligand>
        <name>ATP</name>
        <dbReference type="ChEBI" id="CHEBI:30616"/>
    </ligand>
</feature>
<feature type="binding site" evidence="1">
    <location>
        <begin position="211"/>
        <end position="217"/>
    </location>
    <ligand>
        <name>ATP</name>
        <dbReference type="ChEBI" id="CHEBI:30616"/>
    </ligand>
</feature>